<evidence type="ECO:0000250" key="1">
    <source>
        <dbReference type="UniProtKB" id="Q9BTL3"/>
    </source>
</evidence>
<evidence type="ECO:0000256" key="2">
    <source>
        <dbReference type="SAM" id="MobiDB-lite"/>
    </source>
</evidence>
<evidence type="ECO:0000305" key="3"/>
<protein>
    <recommendedName>
        <fullName evidence="1">RNA guanine-N7 methyltransferase activating subunit</fullName>
    </recommendedName>
    <alternativeName>
        <fullName>Protein FAM103A1</fullName>
    </alternativeName>
    <alternativeName>
        <fullName evidence="1">RNA guanine-7 methyltransferase activating subunit</fullName>
    </alternativeName>
    <alternativeName>
        <fullName evidence="1">RNMT-activating mRNA cap methyltransferase subunit</fullName>
    </alternativeName>
    <alternativeName>
        <fullName evidence="1">RNMT-activating mini protein</fullName>
        <shortName evidence="1">RAM</shortName>
    </alternativeName>
</protein>
<dbReference type="EMBL" id="CR760936">
    <property type="protein sequence ID" value="CAJ82021.1"/>
    <property type="molecule type" value="mRNA"/>
</dbReference>
<dbReference type="RefSeq" id="NP_001037960.1">
    <property type="nucleotide sequence ID" value="NM_001044495.1"/>
</dbReference>
<dbReference type="RefSeq" id="XP_012814615.1">
    <property type="nucleotide sequence ID" value="XM_012959161.3"/>
</dbReference>
<dbReference type="SMR" id="Q28HC9"/>
<dbReference type="FunCoup" id="Q28HC9">
    <property type="interactions" value="991"/>
</dbReference>
<dbReference type="STRING" id="8364.ENSXETP00000054234"/>
<dbReference type="PaxDb" id="8364-ENSXETP00000061426"/>
<dbReference type="DNASU" id="733725"/>
<dbReference type="GeneID" id="733725"/>
<dbReference type="KEGG" id="xtr:733725"/>
<dbReference type="AGR" id="Xenbase:XB-GENE-969014"/>
<dbReference type="CTD" id="83640"/>
<dbReference type="Xenbase" id="XB-GENE-969014">
    <property type="gene designation" value="ramac"/>
</dbReference>
<dbReference type="eggNOG" id="ENOG502S60Q">
    <property type="taxonomic scope" value="Eukaryota"/>
</dbReference>
<dbReference type="HOGENOM" id="CLU_144253_0_0_1"/>
<dbReference type="InParanoid" id="Q28HC9"/>
<dbReference type="OMA" id="PPIIEEW"/>
<dbReference type="OrthoDB" id="5875297at2759"/>
<dbReference type="PhylomeDB" id="Q28HC9"/>
<dbReference type="Proteomes" id="UP000008143">
    <property type="component" value="Chromosome 3"/>
</dbReference>
<dbReference type="Bgee" id="ENSXETG00000030369">
    <property type="expression patterns" value="Expressed in ovary and 13 other cell types or tissues"/>
</dbReference>
<dbReference type="GO" id="GO:0160130">
    <property type="term" value="C:mRNA cap methyltransferase RNMT:RAMAC complex"/>
    <property type="evidence" value="ECO:0000250"/>
    <property type="project" value="UniProtKB"/>
</dbReference>
<dbReference type="GO" id="GO:0031533">
    <property type="term" value="C:mRNA capping enzyme complex"/>
    <property type="evidence" value="ECO:0000250"/>
    <property type="project" value="UniProtKB"/>
</dbReference>
<dbReference type="GO" id="GO:0005634">
    <property type="term" value="C:nucleus"/>
    <property type="evidence" value="ECO:0000250"/>
    <property type="project" value="UniProtKB"/>
</dbReference>
<dbReference type="GO" id="GO:0008047">
    <property type="term" value="F:enzyme activator activity"/>
    <property type="evidence" value="ECO:0000250"/>
    <property type="project" value="UniProtKB"/>
</dbReference>
<dbReference type="GO" id="GO:0003723">
    <property type="term" value="F:RNA binding"/>
    <property type="evidence" value="ECO:0000250"/>
    <property type="project" value="UniProtKB"/>
</dbReference>
<dbReference type="GO" id="GO:0006370">
    <property type="term" value="P:7-methylguanosine mRNA capping"/>
    <property type="evidence" value="ECO:0000250"/>
    <property type="project" value="UniProtKB"/>
</dbReference>
<dbReference type="GO" id="GO:0106005">
    <property type="term" value="P:RNA 5'-cap (guanine-N7)-methylation"/>
    <property type="evidence" value="ECO:0007669"/>
    <property type="project" value="InterPro"/>
</dbReference>
<dbReference type="InterPro" id="IPR028271">
    <property type="entry name" value="RAMAC"/>
</dbReference>
<dbReference type="PANTHER" id="PTHR48168">
    <property type="entry name" value="RNA GUANINE-7 METHYLTRANSFERASE-ACTIVATING SUBUNIT-LIKE (PSEUDOGENE)-RELATED"/>
    <property type="match status" value="1"/>
</dbReference>
<dbReference type="PANTHER" id="PTHR48168:SF1">
    <property type="entry name" value="RNA GUANINE-N7 METHYLTRANSFERASE ACTIVATING SUBUNIT-RELATED"/>
    <property type="match status" value="1"/>
</dbReference>
<dbReference type="Pfam" id="PF15320">
    <property type="entry name" value="RAM"/>
    <property type="match status" value="1"/>
</dbReference>
<comment type="function">
    <text evidence="1">Regulatory subunit of the mRNA-capping methyltransferase RNMT:RAMAC complex that methylates the N7 position of the added guanosine to the 5'-cap structure of mRNAs. Promotes the recruitment of the methyl donor, S-adenosyl-L-methionine, to RNMT. Regulates RNMT expression by a post-transcriptional stabilizing mechanism. Binds RNA.</text>
</comment>
<comment type="subcellular location">
    <subcellularLocation>
        <location evidence="1">Nucleus</location>
    </subcellularLocation>
</comment>
<comment type="similarity">
    <text evidence="3">Belongs to the RAM family.</text>
</comment>
<keyword id="KW-0506">mRNA capping</keyword>
<keyword id="KW-0507">mRNA processing</keyword>
<keyword id="KW-0539">Nucleus</keyword>
<keyword id="KW-1185">Reference proteome</keyword>
<keyword id="KW-0694">RNA-binding</keyword>
<name>RAMAC_XENTR</name>
<proteinExistence type="inferred from homology"/>
<accession>Q28HC9</accession>
<reference key="1">
    <citation type="submission" date="2006-10" db="EMBL/GenBank/DDBJ databases">
        <authorList>
            <consortium name="Sanger Xenopus tropicalis EST/cDNA project"/>
        </authorList>
    </citation>
    <scope>NUCLEOTIDE SEQUENCE [LARGE SCALE MRNA]</scope>
    <source>
        <tissue>Egg</tissue>
    </source>
</reference>
<gene>
    <name type="primary">ramac</name>
    <name type="synonym">fam103a1</name>
    <name type="synonym">rammet</name>
    <name type="ORF">TEgg087e08.1</name>
</gene>
<feature type="chain" id="PRO_0000295548" description="RNA guanine-N7 methyltransferase activating subunit">
    <location>
        <begin position="1"/>
        <end position="116"/>
    </location>
</feature>
<feature type="region of interest" description="Interaction with RNMT" evidence="1">
    <location>
        <begin position="1"/>
        <end position="55"/>
    </location>
</feature>
<feature type="region of interest" description="Disordered" evidence="2">
    <location>
        <begin position="31"/>
        <end position="116"/>
    </location>
</feature>
<feature type="region of interest" description="RNA-binding" evidence="1">
    <location>
        <begin position="56"/>
        <end position="116"/>
    </location>
</feature>
<feature type="short sequence motif" description="RNMT-activating domain" evidence="1">
    <location>
        <begin position="36"/>
        <end position="42"/>
    </location>
</feature>
<feature type="compositionally biased region" description="Low complexity" evidence="2">
    <location>
        <begin position="67"/>
        <end position="78"/>
    </location>
</feature>
<feature type="compositionally biased region" description="Polar residues" evidence="2">
    <location>
        <begin position="97"/>
        <end position="110"/>
    </location>
</feature>
<sequence length="116" mass="14301">MAEALGAQELYEKMFEQRFTANDKEYQEYLKREQDQPPIVEDWKMGNQRNTDRYRDNRHHRGWDGRQNWSSNSYNQSYGRGGWGNSYNQYRQDRHNYQQGHYTHNPSNQRFHSDRY</sequence>
<organism>
    <name type="scientific">Xenopus tropicalis</name>
    <name type="common">Western clawed frog</name>
    <name type="synonym">Silurana tropicalis</name>
    <dbReference type="NCBI Taxonomy" id="8364"/>
    <lineage>
        <taxon>Eukaryota</taxon>
        <taxon>Metazoa</taxon>
        <taxon>Chordata</taxon>
        <taxon>Craniata</taxon>
        <taxon>Vertebrata</taxon>
        <taxon>Euteleostomi</taxon>
        <taxon>Amphibia</taxon>
        <taxon>Batrachia</taxon>
        <taxon>Anura</taxon>
        <taxon>Pipoidea</taxon>
        <taxon>Pipidae</taxon>
        <taxon>Xenopodinae</taxon>
        <taxon>Xenopus</taxon>
        <taxon>Silurana</taxon>
    </lineage>
</organism>